<organism>
    <name type="scientific">Alteromonas mediterranea (strain DSM 17117 / CIP 110805 / LMG 28347 / Deep ecotype)</name>
    <dbReference type="NCBI Taxonomy" id="1774373"/>
    <lineage>
        <taxon>Bacteria</taxon>
        <taxon>Pseudomonadati</taxon>
        <taxon>Pseudomonadota</taxon>
        <taxon>Gammaproteobacteria</taxon>
        <taxon>Alteromonadales</taxon>
        <taxon>Alteromonadaceae</taxon>
        <taxon>Alteromonas/Salinimonas group</taxon>
        <taxon>Alteromonas</taxon>
    </lineage>
</organism>
<comment type="similarity">
    <text evidence="1">Belongs to the bacterial ribosomal protein bL33 family.</text>
</comment>
<dbReference type="EMBL" id="CP001103">
    <property type="protein sequence ID" value="AEA96203.1"/>
    <property type="molecule type" value="Genomic_DNA"/>
</dbReference>
<dbReference type="RefSeq" id="WP_012516577.1">
    <property type="nucleotide sequence ID" value="NC_011138.3"/>
</dbReference>
<dbReference type="SMR" id="B4S2C4"/>
<dbReference type="GeneID" id="56340678"/>
<dbReference type="KEGG" id="amc:MADE_1000270"/>
<dbReference type="HOGENOM" id="CLU_190949_1_1_6"/>
<dbReference type="Proteomes" id="UP000001870">
    <property type="component" value="Chromosome"/>
</dbReference>
<dbReference type="GO" id="GO:0022625">
    <property type="term" value="C:cytosolic large ribosomal subunit"/>
    <property type="evidence" value="ECO:0007669"/>
    <property type="project" value="TreeGrafter"/>
</dbReference>
<dbReference type="GO" id="GO:0003735">
    <property type="term" value="F:structural constituent of ribosome"/>
    <property type="evidence" value="ECO:0007669"/>
    <property type="project" value="InterPro"/>
</dbReference>
<dbReference type="GO" id="GO:0006412">
    <property type="term" value="P:translation"/>
    <property type="evidence" value="ECO:0007669"/>
    <property type="project" value="UniProtKB-UniRule"/>
</dbReference>
<dbReference type="FunFam" id="2.20.28.120:FF:000001">
    <property type="entry name" value="50S ribosomal protein L33"/>
    <property type="match status" value="1"/>
</dbReference>
<dbReference type="Gene3D" id="2.20.28.120">
    <property type="entry name" value="Ribosomal protein L33"/>
    <property type="match status" value="1"/>
</dbReference>
<dbReference type="HAMAP" id="MF_00294">
    <property type="entry name" value="Ribosomal_bL33"/>
    <property type="match status" value="1"/>
</dbReference>
<dbReference type="InterPro" id="IPR001705">
    <property type="entry name" value="Ribosomal_bL33"/>
</dbReference>
<dbReference type="InterPro" id="IPR018264">
    <property type="entry name" value="Ribosomal_bL33_CS"/>
</dbReference>
<dbReference type="InterPro" id="IPR038584">
    <property type="entry name" value="Ribosomal_bL33_sf"/>
</dbReference>
<dbReference type="InterPro" id="IPR011332">
    <property type="entry name" value="Ribosomal_zn-bd"/>
</dbReference>
<dbReference type="NCBIfam" id="NF001860">
    <property type="entry name" value="PRK00595.1"/>
    <property type="match status" value="1"/>
</dbReference>
<dbReference type="NCBIfam" id="TIGR01023">
    <property type="entry name" value="rpmG_bact"/>
    <property type="match status" value="1"/>
</dbReference>
<dbReference type="PANTHER" id="PTHR15238">
    <property type="entry name" value="54S RIBOSOMAL PROTEIN L39, MITOCHONDRIAL"/>
    <property type="match status" value="1"/>
</dbReference>
<dbReference type="PANTHER" id="PTHR15238:SF1">
    <property type="entry name" value="LARGE RIBOSOMAL SUBUNIT PROTEIN BL33M"/>
    <property type="match status" value="1"/>
</dbReference>
<dbReference type="Pfam" id="PF00471">
    <property type="entry name" value="Ribosomal_L33"/>
    <property type="match status" value="1"/>
</dbReference>
<dbReference type="SUPFAM" id="SSF57829">
    <property type="entry name" value="Zn-binding ribosomal proteins"/>
    <property type="match status" value="1"/>
</dbReference>
<dbReference type="PROSITE" id="PS00582">
    <property type="entry name" value="RIBOSOMAL_L33"/>
    <property type="match status" value="1"/>
</dbReference>
<feature type="chain" id="PRO_0000356371" description="Large ribosomal subunit protein bL33">
    <location>
        <begin position="1"/>
        <end position="51"/>
    </location>
</feature>
<sequence>MRDKIKLVSSAGTGFFYTTDKNKRNMPGKMEIKKYDPVVRKHVMFKEAKIK</sequence>
<name>RL33_ALTMD</name>
<keyword id="KW-0687">Ribonucleoprotein</keyword>
<keyword id="KW-0689">Ribosomal protein</keyword>
<proteinExistence type="inferred from homology"/>
<accession>B4S2C4</accession>
<accession>F2G1V6</accession>
<reference key="1">
    <citation type="journal article" date="2008" name="ISME J.">
        <title>Comparative genomics of two ecotypes of the marine planktonic copiotroph Alteromonas macleodii suggests alternative lifestyles associated with different kinds of particulate organic matter.</title>
        <authorList>
            <person name="Ivars-Martinez E."/>
            <person name="Martin-Cuadrado A.-B."/>
            <person name="D'Auria G."/>
            <person name="Mira A."/>
            <person name="Ferriera S."/>
            <person name="Johnson J."/>
            <person name="Friedman R."/>
            <person name="Rodriguez-Valera F."/>
        </authorList>
    </citation>
    <scope>NUCLEOTIDE SEQUENCE [LARGE SCALE GENOMIC DNA]</scope>
    <source>
        <strain>DSM 17117 / CIP 110805 / LMG 28347 / Deep ecotype</strain>
    </source>
</reference>
<evidence type="ECO:0000255" key="1">
    <source>
        <dbReference type="HAMAP-Rule" id="MF_00294"/>
    </source>
</evidence>
<evidence type="ECO:0000305" key="2"/>
<protein>
    <recommendedName>
        <fullName evidence="1">Large ribosomal subunit protein bL33</fullName>
    </recommendedName>
    <alternativeName>
        <fullName evidence="2">50S ribosomal protein L33</fullName>
    </alternativeName>
</protein>
<gene>
    <name evidence="1" type="primary">rpmG</name>
    <name type="ordered locus">MADE_1000270</name>
</gene>